<gene>
    <name type="ordered locus">Mmwyl1_2153</name>
</gene>
<comment type="similarity">
    <text evidence="1">Belongs to the UPF0434 family.</text>
</comment>
<name>Y2153_MARMS</name>
<proteinExistence type="inferred from homology"/>
<dbReference type="EMBL" id="CP000749">
    <property type="protein sequence ID" value="ABR71075.1"/>
    <property type="molecule type" value="Genomic_DNA"/>
</dbReference>
<dbReference type="SMR" id="A6VX96"/>
<dbReference type="STRING" id="400668.Mmwyl1_2153"/>
<dbReference type="KEGG" id="mmw:Mmwyl1_2153"/>
<dbReference type="eggNOG" id="COG2835">
    <property type="taxonomic scope" value="Bacteria"/>
</dbReference>
<dbReference type="HOGENOM" id="CLU_155659_3_1_6"/>
<dbReference type="OrthoDB" id="9812205at2"/>
<dbReference type="GO" id="GO:0005829">
    <property type="term" value="C:cytosol"/>
    <property type="evidence" value="ECO:0007669"/>
    <property type="project" value="TreeGrafter"/>
</dbReference>
<dbReference type="FunFam" id="2.20.25.10:FF:000002">
    <property type="entry name" value="UPF0434 protein YcaR"/>
    <property type="match status" value="1"/>
</dbReference>
<dbReference type="Gene3D" id="2.20.25.10">
    <property type="match status" value="1"/>
</dbReference>
<dbReference type="HAMAP" id="MF_01187">
    <property type="entry name" value="UPF0434"/>
    <property type="match status" value="1"/>
</dbReference>
<dbReference type="InterPro" id="IPR005651">
    <property type="entry name" value="Trm112-like"/>
</dbReference>
<dbReference type="PANTHER" id="PTHR33505:SF4">
    <property type="entry name" value="PROTEIN PREY, MITOCHONDRIAL"/>
    <property type="match status" value="1"/>
</dbReference>
<dbReference type="PANTHER" id="PTHR33505">
    <property type="entry name" value="ZGC:162634"/>
    <property type="match status" value="1"/>
</dbReference>
<dbReference type="Pfam" id="PF03966">
    <property type="entry name" value="Trm112p"/>
    <property type="match status" value="1"/>
</dbReference>
<dbReference type="SUPFAM" id="SSF158997">
    <property type="entry name" value="Trm112p-like"/>
    <property type="match status" value="1"/>
</dbReference>
<organism>
    <name type="scientific">Marinomonas sp. (strain MWYL1)</name>
    <dbReference type="NCBI Taxonomy" id="400668"/>
    <lineage>
        <taxon>Bacteria</taxon>
        <taxon>Pseudomonadati</taxon>
        <taxon>Pseudomonadota</taxon>
        <taxon>Gammaproteobacteria</taxon>
        <taxon>Oceanospirillales</taxon>
        <taxon>Oceanospirillaceae</taxon>
        <taxon>Marinomonas</taxon>
    </lineage>
</organism>
<feature type="chain" id="PRO_1000085458" description="UPF0434 protein Mmwyl1_2153">
    <location>
        <begin position="1"/>
        <end position="65"/>
    </location>
</feature>
<evidence type="ECO:0000255" key="1">
    <source>
        <dbReference type="HAMAP-Rule" id="MF_01187"/>
    </source>
</evidence>
<accession>A6VX96</accession>
<sequence length="65" mass="6904">MNKTLLDILVCPVTKASLTLSKDGTELISKVGGMAYPVRDGIPVLLETEARTLTADERLDSGSAK</sequence>
<reference key="1">
    <citation type="submission" date="2007-06" db="EMBL/GenBank/DDBJ databases">
        <title>Complete sequence of Marinomonas sp. MWYL1.</title>
        <authorList>
            <consortium name="US DOE Joint Genome Institute"/>
            <person name="Copeland A."/>
            <person name="Lucas S."/>
            <person name="Lapidus A."/>
            <person name="Barry K."/>
            <person name="Glavina del Rio T."/>
            <person name="Dalin E."/>
            <person name="Tice H."/>
            <person name="Pitluck S."/>
            <person name="Kiss H."/>
            <person name="Brettin T."/>
            <person name="Bruce D."/>
            <person name="Detter J.C."/>
            <person name="Han C."/>
            <person name="Schmutz J."/>
            <person name="Larimer F."/>
            <person name="Land M."/>
            <person name="Hauser L."/>
            <person name="Kyrpides N."/>
            <person name="Kim E."/>
            <person name="Johnston A.W.B."/>
            <person name="Todd J.D."/>
            <person name="Rogers R."/>
            <person name="Wexler M."/>
            <person name="Bond P.L."/>
            <person name="Li Y."/>
            <person name="Richardson P."/>
        </authorList>
    </citation>
    <scope>NUCLEOTIDE SEQUENCE [LARGE SCALE GENOMIC DNA]</scope>
    <source>
        <strain>MWYL1</strain>
    </source>
</reference>
<protein>
    <recommendedName>
        <fullName evidence="1">UPF0434 protein Mmwyl1_2153</fullName>
    </recommendedName>
</protein>